<name>KAPR_KLULA</name>
<dbReference type="EMBL" id="CR382125">
    <property type="protein sequence ID" value="CAG99219.1"/>
    <property type="molecule type" value="Genomic_DNA"/>
</dbReference>
<dbReference type="RefSeq" id="XP_454132.1">
    <property type="nucleotide sequence ID" value="XM_454132.1"/>
</dbReference>
<dbReference type="SMR" id="Q6CPK7"/>
<dbReference type="FunCoup" id="Q6CPK7">
    <property type="interactions" value="471"/>
</dbReference>
<dbReference type="STRING" id="284590.Q6CPK7"/>
<dbReference type="PaxDb" id="284590-Q6CPK7"/>
<dbReference type="KEGG" id="kla:KLLA0_E04181g"/>
<dbReference type="eggNOG" id="KOG1113">
    <property type="taxonomic scope" value="Eukaryota"/>
</dbReference>
<dbReference type="HOGENOM" id="CLU_018310_0_1_1"/>
<dbReference type="InParanoid" id="Q6CPK7"/>
<dbReference type="OMA" id="MPYERSK"/>
<dbReference type="Proteomes" id="UP000000598">
    <property type="component" value="Chromosome E"/>
</dbReference>
<dbReference type="GO" id="GO:0005952">
    <property type="term" value="C:cAMP-dependent protein kinase complex"/>
    <property type="evidence" value="ECO:0007669"/>
    <property type="project" value="InterPro"/>
</dbReference>
<dbReference type="GO" id="GO:0005829">
    <property type="term" value="C:cytosol"/>
    <property type="evidence" value="ECO:0007669"/>
    <property type="project" value="TreeGrafter"/>
</dbReference>
<dbReference type="GO" id="GO:0005634">
    <property type="term" value="C:nucleus"/>
    <property type="evidence" value="ECO:0007669"/>
    <property type="project" value="TreeGrafter"/>
</dbReference>
<dbReference type="GO" id="GO:0030552">
    <property type="term" value="F:cAMP binding"/>
    <property type="evidence" value="ECO:0007669"/>
    <property type="project" value="UniProtKB-KW"/>
</dbReference>
<dbReference type="GO" id="GO:0004862">
    <property type="term" value="F:cAMP-dependent protein kinase inhibitor activity"/>
    <property type="evidence" value="ECO:0007669"/>
    <property type="project" value="TreeGrafter"/>
</dbReference>
<dbReference type="GO" id="GO:0034236">
    <property type="term" value="F:protein kinase A catalytic subunit binding"/>
    <property type="evidence" value="ECO:0007669"/>
    <property type="project" value="TreeGrafter"/>
</dbReference>
<dbReference type="CDD" id="cd00038">
    <property type="entry name" value="CAP_ED"/>
    <property type="match status" value="2"/>
</dbReference>
<dbReference type="CDD" id="cd12098">
    <property type="entry name" value="DD_R_ScPKA-like"/>
    <property type="match status" value="1"/>
</dbReference>
<dbReference type="FunFam" id="2.60.120.10:FF:000039">
    <property type="entry name" value="cAMP-dependent protein kinase regulatory subunit"/>
    <property type="match status" value="1"/>
</dbReference>
<dbReference type="FunFam" id="2.60.120.10:FF:000118">
    <property type="entry name" value="cAMP-dependent protein kinase regulatory subunit"/>
    <property type="match status" value="1"/>
</dbReference>
<dbReference type="Gene3D" id="2.60.120.10">
    <property type="entry name" value="Jelly Rolls"/>
    <property type="match status" value="2"/>
</dbReference>
<dbReference type="InterPro" id="IPR050503">
    <property type="entry name" value="cAMP-dep_PK_reg_su-like"/>
</dbReference>
<dbReference type="InterPro" id="IPR012198">
    <property type="entry name" value="cAMP_dep_PK_reg_su"/>
</dbReference>
<dbReference type="InterPro" id="IPR003117">
    <property type="entry name" value="cAMP_dep_PK_reg_su_I/II_a/b"/>
</dbReference>
<dbReference type="InterPro" id="IPR018488">
    <property type="entry name" value="cNMP-bd_CS"/>
</dbReference>
<dbReference type="InterPro" id="IPR000595">
    <property type="entry name" value="cNMP-bd_dom"/>
</dbReference>
<dbReference type="InterPro" id="IPR018490">
    <property type="entry name" value="cNMP-bd_dom_sf"/>
</dbReference>
<dbReference type="InterPro" id="IPR014710">
    <property type="entry name" value="RmlC-like_jellyroll"/>
</dbReference>
<dbReference type="PANTHER" id="PTHR11635">
    <property type="entry name" value="CAMP-DEPENDENT PROTEIN KINASE REGULATORY CHAIN"/>
    <property type="match status" value="1"/>
</dbReference>
<dbReference type="PANTHER" id="PTHR11635:SF152">
    <property type="entry name" value="CAMP-DEPENDENT PROTEIN KINASE TYPE I REGULATORY SUBUNIT-RELATED"/>
    <property type="match status" value="1"/>
</dbReference>
<dbReference type="Pfam" id="PF00027">
    <property type="entry name" value="cNMP_binding"/>
    <property type="match status" value="2"/>
</dbReference>
<dbReference type="Pfam" id="PF02197">
    <property type="entry name" value="RIIa"/>
    <property type="match status" value="1"/>
</dbReference>
<dbReference type="PIRSF" id="PIRSF000548">
    <property type="entry name" value="PK_regulatory"/>
    <property type="match status" value="1"/>
</dbReference>
<dbReference type="PRINTS" id="PR00103">
    <property type="entry name" value="CAMPKINASE"/>
</dbReference>
<dbReference type="SMART" id="SM00100">
    <property type="entry name" value="cNMP"/>
    <property type="match status" value="2"/>
</dbReference>
<dbReference type="SMART" id="SM00394">
    <property type="entry name" value="RIIa"/>
    <property type="match status" value="1"/>
</dbReference>
<dbReference type="SUPFAM" id="SSF51206">
    <property type="entry name" value="cAMP-binding domain-like"/>
    <property type="match status" value="2"/>
</dbReference>
<dbReference type="PROSITE" id="PS00888">
    <property type="entry name" value="CNMP_BINDING_1"/>
    <property type="match status" value="2"/>
</dbReference>
<dbReference type="PROSITE" id="PS00889">
    <property type="entry name" value="CNMP_BINDING_2"/>
    <property type="match status" value="2"/>
</dbReference>
<dbReference type="PROSITE" id="PS50042">
    <property type="entry name" value="CNMP_BINDING_3"/>
    <property type="match status" value="2"/>
</dbReference>
<keyword id="KW-0114">cAMP</keyword>
<keyword id="KW-0116">cAMP-binding</keyword>
<keyword id="KW-0547">Nucleotide-binding</keyword>
<keyword id="KW-0597">Phosphoprotein</keyword>
<keyword id="KW-1185">Reference proteome</keyword>
<keyword id="KW-0677">Repeat</keyword>
<evidence type="ECO:0000250" key="1"/>
<evidence type="ECO:0000255" key="2"/>
<evidence type="ECO:0000256" key="3">
    <source>
        <dbReference type="SAM" id="MobiDB-lite"/>
    </source>
</evidence>
<evidence type="ECO:0000305" key="4"/>
<accession>Q6CPK7</accession>
<proteinExistence type="inferred from homology"/>
<sequence length="466" mass="51276">MATYQTELDLFKNEVEQKQPNDFLQFAANYFTKRLEQQRTFVRNQESLALSKGIVLFPSTSKHDSVAASSASLSHGSSKANASQSGISSSGVDEDVLFKSPFVDRGPHSTHIVDHLDSTHSNTTASPAKASGGDAPGIFKGNFNVGTESQRKVNSSVDPMAPEPTATTHSFPRRSVVNPKPLPINFNAQRRTSVSGETLQPDHLDDWKPENFQEKSPEQVSRLEKAVGKNFLFNKLDSDSKKLVINSLEEKSIPQGKEIIKQGDEGDYFYIVEDGTVEFYVNNQKVNTSGPGSSFGELALMYNSPRAATVIASTDCILWALDRLTFRRILLGGSFKKRILYDDLLKNIPILKSLSTYDRAKLADALDTEYYEAGQTIIKEGDTGENFYFIEYGEADVSQEGKGVITKLGKGDYFGEVALLNDLPRQATVTATARTKVATLGKSGFQRLLGPVVDVLKLNDPTRSKH</sequence>
<comment type="subunit">
    <text evidence="1">Tetramer, composed of 2 regulatory (R) and 2 catalytic (C) subunits. In the presence of cAMP it dissociates into 2 active monomeric C subunits and an R dimer (By similarity).</text>
</comment>
<comment type="similarity">
    <text evidence="4">Belongs to the cAMP-dependent kinase regulatory chain family.</text>
</comment>
<protein>
    <recommendedName>
        <fullName>cAMP-dependent protein kinase regulatory subunit</fullName>
        <shortName>PKA regulatory subunit</shortName>
    </recommendedName>
</protein>
<organism>
    <name type="scientific">Kluyveromyces lactis (strain ATCC 8585 / CBS 2359 / DSM 70799 / NBRC 1267 / NRRL Y-1140 / WM37)</name>
    <name type="common">Yeast</name>
    <name type="synonym">Candida sphaerica</name>
    <dbReference type="NCBI Taxonomy" id="284590"/>
    <lineage>
        <taxon>Eukaryota</taxon>
        <taxon>Fungi</taxon>
        <taxon>Dikarya</taxon>
        <taxon>Ascomycota</taxon>
        <taxon>Saccharomycotina</taxon>
        <taxon>Saccharomycetes</taxon>
        <taxon>Saccharomycetales</taxon>
        <taxon>Saccharomycetaceae</taxon>
        <taxon>Kluyveromyces</taxon>
    </lineage>
</organism>
<reference key="1">
    <citation type="journal article" date="2004" name="Nature">
        <title>Genome evolution in yeasts.</title>
        <authorList>
            <person name="Dujon B."/>
            <person name="Sherman D."/>
            <person name="Fischer G."/>
            <person name="Durrens P."/>
            <person name="Casaregola S."/>
            <person name="Lafontaine I."/>
            <person name="de Montigny J."/>
            <person name="Marck C."/>
            <person name="Neuveglise C."/>
            <person name="Talla E."/>
            <person name="Goffard N."/>
            <person name="Frangeul L."/>
            <person name="Aigle M."/>
            <person name="Anthouard V."/>
            <person name="Babour A."/>
            <person name="Barbe V."/>
            <person name="Barnay S."/>
            <person name="Blanchin S."/>
            <person name="Beckerich J.-M."/>
            <person name="Beyne E."/>
            <person name="Bleykasten C."/>
            <person name="Boisrame A."/>
            <person name="Boyer J."/>
            <person name="Cattolico L."/>
            <person name="Confanioleri F."/>
            <person name="de Daruvar A."/>
            <person name="Despons L."/>
            <person name="Fabre E."/>
            <person name="Fairhead C."/>
            <person name="Ferry-Dumazet H."/>
            <person name="Groppi A."/>
            <person name="Hantraye F."/>
            <person name="Hennequin C."/>
            <person name="Jauniaux N."/>
            <person name="Joyet P."/>
            <person name="Kachouri R."/>
            <person name="Kerrest A."/>
            <person name="Koszul R."/>
            <person name="Lemaire M."/>
            <person name="Lesur I."/>
            <person name="Ma L."/>
            <person name="Muller H."/>
            <person name="Nicaud J.-M."/>
            <person name="Nikolski M."/>
            <person name="Oztas S."/>
            <person name="Ozier-Kalogeropoulos O."/>
            <person name="Pellenz S."/>
            <person name="Potier S."/>
            <person name="Richard G.-F."/>
            <person name="Straub M.-L."/>
            <person name="Suleau A."/>
            <person name="Swennen D."/>
            <person name="Tekaia F."/>
            <person name="Wesolowski-Louvel M."/>
            <person name="Westhof E."/>
            <person name="Wirth B."/>
            <person name="Zeniou-Meyer M."/>
            <person name="Zivanovic Y."/>
            <person name="Bolotin-Fukuhara M."/>
            <person name="Thierry A."/>
            <person name="Bouchier C."/>
            <person name="Caudron B."/>
            <person name="Scarpelli C."/>
            <person name="Gaillardin C."/>
            <person name="Weissenbach J."/>
            <person name="Wincker P."/>
            <person name="Souciet J.-L."/>
        </authorList>
    </citation>
    <scope>NUCLEOTIDE SEQUENCE [LARGE SCALE GENOMIC DNA]</scope>
    <source>
        <strain>ATCC 8585 / CBS 2359 / DSM 70799 / NBRC 1267 / NRRL Y-1140 / WM37</strain>
    </source>
</reference>
<gene>
    <name type="primary">PKAR</name>
    <name type="ordered locus">KLLA0E04070g</name>
</gene>
<feature type="chain" id="PRO_0000205410" description="cAMP-dependent protein kinase regulatory subunit">
    <location>
        <begin position="1"/>
        <end position="466"/>
    </location>
</feature>
<feature type="region of interest" description="Dimerization and phosphorylation" evidence="2">
    <location>
        <begin position="25"/>
        <end position="231"/>
    </location>
</feature>
<feature type="region of interest" description="Disordered" evidence="3">
    <location>
        <begin position="71"/>
        <end position="90"/>
    </location>
</feature>
<feature type="region of interest" description="Disordered" evidence="3">
    <location>
        <begin position="109"/>
        <end position="139"/>
    </location>
</feature>
<feature type="region of interest" description="Disordered" evidence="3">
    <location>
        <begin position="154"/>
        <end position="179"/>
    </location>
</feature>
<feature type="region of interest" description="Disordered" evidence="3">
    <location>
        <begin position="193"/>
        <end position="218"/>
    </location>
</feature>
<feature type="compositionally biased region" description="Low complexity" evidence="3">
    <location>
        <begin position="71"/>
        <end position="80"/>
    </location>
</feature>
<feature type="compositionally biased region" description="Polar residues" evidence="3">
    <location>
        <begin position="81"/>
        <end position="90"/>
    </location>
</feature>
<feature type="compositionally biased region" description="Basic and acidic residues" evidence="3">
    <location>
        <begin position="109"/>
        <end position="118"/>
    </location>
</feature>
<feature type="compositionally biased region" description="Basic and acidic residues" evidence="3">
    <location>
        <begin position="200"/>
        <end position="218"/>
    </location>
</feature>
<feature type="binding site">
    <location>
        <begin position="232"/>
        <end position="347"/>
    </location>
    <ligand>
        <name>3',5'-cyclic AMP</name>
        <dbReference type="ChEBI" id="CHEBI:58165"/>
        <label>1</label>
    </ligand>
</feature>
<feature type="binding site" evidence="1">
    <location>
        <position position="297"/>
    </location>
    <ligand>
        <name>3',5'-cyclic AMP</name>
        <dbReference type="ChEBI" id="CHEBI:58165"/>
        <label>1</label>
    </ligand>
</feature>
<feature type="binding site" evidence="1">
    <location>
        <position position="306"/>
    </location>
    <ligand>
        <name>3',5'-cyclic AMP</name>
        <dbReference type="ChEBI" id="CHEBI:58165"/>
        <label>1</label>
    </ligand>
</feature>
<feature type="binding site">
    <location>
        <begin position="350"/>
        <end position="466"/>
    </location>
    <ligand>
        <name>3',5'-cyclic AMP</name>
        <dbReference type="ChEBI" id="CHEBI:58165"/>
        <label>2</label>
    </ligand>
</feature>
<feature type="binding site" evidence="1">
    <location>
        <position position="416"/>
    </location>
    <ligand>
        <name>3',5'-cyclic AMP</name>
        <dbReference type="ChEBI" id="CHEBI:58165"/>
        <label>2</label>
    </ligand>
</feature>
<feature type="binding site" evidence="1">
    <location>
        <position position="425"/>
    </location>
    <ligand>
        <name>3',5'-cyclic AMP</name>
        <dbReference type="ChEBI" id="CHEBI:58165"/>
        <label>2</label>
    </ligand>
</feature>
<feature type="modified residue" description="Phosphoserine" evidence="1">
    <location>
        <position position="193"/>
    </location>
</feature>